<feature type="chain" id="PRO_1000023918" description="Uroporphyrinogen decarboxylase">
    <location>
        <begin position="1"/>
        <end position="345"/>
    </location>
</feature>
<feature type="binding site" evidence="1">
    <location>
        <begin position="27"/>
        <end position="31"/>
    </location>
    <ligand>
        <name>substrate</name>
    </ligand>
</feature>
<feature type="binding site" evidence="1">
    <location>
        <position position="77"/>
    </location>
    <ligand>
        <name>substrate</name>
    </ligand>
</feature>
<feature type="binding site" evidence="1">
    <location>
        <position position="152"/>
    </location>
    <ligand>
        <name>substrate</name>
    </ligand>
</feature>
<feature type="binding site" evidence="1">
    <location>
        <position position="207"/>
    </location>
    <ligand>
        <name>substrate</name>
    </ligand>
</feature>
<feature type="binding site" evidence="1">
    <location>
        <position position="323"/>
    </location>
    <ligand>
        <name>substrate</name>
    </ligand>
</feature>
<feature type="site" description="Transition state stabilizer" evidence="1">
    <location>
        <position position="77"/>
    </location>
</feature>
<sequence>MNDLTKKPILQVLAGETVSPPPVWLMRQAGRYLAEYRQVRSRAKNFIDFCFSPDLAAEVTLQPIRRFGFDAAILFADILLVPIALGRKVWFVTGEGPQLEPFDPRQFEELRLDQTEAVLGSIGETLKRVVPELPDTTTMIGFAGSPWTVATYMVEGGGSKDRFRTRVAAWEYPEAFDGMLDRIADVTAEYLIMQARSGAEVLKLFDSWAEGLPEPLFERVVIRPTKRIVDAVRAAGIDVPIIGFPRGAGTLYPRYARETGVTAIAVDTGVDPAWIQSVLPAGMPVQGHLDPSVLRAGGAALDGEVDRLLDQWAGRPHIFNLGHGITPDVPVAHVEQLLARIRDRS</sequence>
<comment type="function">
    <text evidence="1">Catalyzes the decarboxylation of four acetate groups of uroporphyrinogen-III to yield coproporphyrinogen-III.</text>
</comment>
<comment type="catalytic activity">
    <reaction evidence="1">
        <text>uroporphyrinogen III + 4 H(+) = coproporphyrinogen III + 4 CO2</text>
        <dbReference type="Rhea" id="RHEA:19865"/>
        <dbReference type="ChEBI" id="CHEBI:15378"/>
        <dbReference type="ChEBI" id="CHEBI:16526"/>
        <dbReference type="ChEBI" id="CHEBI:57308"/>
        <dbReference type="ChEBI" id="CHEBI:57309"/>
        <dbReference type="EC" id="4.1.1.37"/>
    </reaction>
</comment>
<comment type="pathway">
    <text evidence="1">Porphyrin-containing compound metabolism; protoporphyrin-IX biosynthesis; coproporphyrinogen-III from 5-aminolevulinate: step 4/4.</text>
</comment>
<comment type="subunit">
    <text evidence="1">Homodimer.</text>
</comment>
<comment type="subcellular location">
    <subcellularLocation>
        <location evidence="1">Cytoplasm</location>
    </subcellularLocation>
</comment>
<comment type="similarity">
    <text evidence="1">Belongs to the uroporphyrinogen decarboxylase family.</text>
</comment>
<gene>
    <name evidence="1" type="primary">hemE</name>
    <name type="ordered locus">Mmar10_2973</name>
</gene>
<keyword id="KW-0963">Cytoplasm</keyword>
<keyword id="KW-0210">Decarboxylase</keyword>
<keyword id="KW-0456">Lyase</keyword>
<keyword id="KW-0627">Porphyrin biosynthesis</keyword>
<keyword id="KW-1185">Reference proteome</keyword>
<evidence type="ECO:0000255" key="1">
    <source>
        <dbReference type="HAMAP-Rule" id="MF_00218"/>
    </source>
</evidence>
<dbReference type="EC" id="4.1.1.37" evidence="1"/>
<dbReference type="EMBL" id="CP000449">
    <property type="protein sequence ID" value="ABI67254.1"/>
    <property type="molecule type" value="Genomic_DNA"/>
</dbReference>
<dbReference type="RefSeq" id="WP_011644898.1">
    <property type="nucleotide sequence ID" value="NC_008347.1"/>
</dbReference>
<dbReference type="SMR" id="Q0AKD9"/>
<dbReference type="STRING" id="394221.Mmar10_2973"/>
<dbReference type="KEGG" id="mmr:Mmar10_2973"/>
<dbReference type="eggNOG" id="COG0407">
    <property type="taxonomic scope" value="Bacteria"/>
</dbReference>
<dbReference type="HOGENOM" id="CLU_040933_0_0_5"/>
<dbReference type="OrthoDB" id="9806656at2"/>
<dbReference type="UniPathway" id="UPA00251">
    <property type="reaction ID" value="UER00321"/>
</dbReference>
<dbReference type="Proteomes" id="UP000001964">
    <property type="component" value="Chromosome"/>
</dbReference>
<dbReference type="GO" id="GO:0005829">
    <property type="term" value="C:cytosol"/>
    <property type="evidence" value="ECO:0007669"/>
    <property type="project" value="TreeGrafter"/>
</dbReference>
<dbReference type="GO" id="GO:0004853">
    <property type="term" value="F:uroporphyrinogen decarboxylase activity"/>
    <property type="evidence" value="ECO:0007669"/>
    <property type="project" value="UniProtKB-UniRule"/>
</dbReference>
<dbReference type="GO" id="GO:0019353">
    <property type="term" value="P:protoporphyrinogen IX biosynthetic process from glutamate"/>
    <property type="evidence" value="ECO:0007669"/>
    <property type="project" value="TreeGrafter"/>
</dbReference>
<dbReference type="CDD" id="cd00717">
    <property type="entry name" value="URO-D"/>
    <property type="match status" value="1"/>
</dbReference>
<dbReference type="Gene3D" id="3.20.20.210">
    <property type="match status" value="1"/>
</dbReference>
<dbReference type="HAMAP" id="MF_00218">
    <property type="entry name" value="URO_D"/>
    <property type="match status" value="1"/>
</dbReference>
<dbReference type="InterPro" id="IPR038071">
    <property type="entry name" value="UROD/MetE-like_sf"/>
</dbReference>
<dbReference type="InterPro" id="IPR006361">
    <property type="entry name" value="Uroporphyrinogen_deCO2ase_HemE"/>
</dbReference>
<dbReference type="InterPro" id="IPR000257">
    <property type="entry name" value="Uroporphyrinogen_deCOase"/>
</dbReference>
<dbReference type="NCBIfam" id="TIGR01464">
    <property type="entry name" value="hemE"/>
    <property type="match status" value="1"/>
</dbReference>
<dbReference type="PANTHER" id="PTHR21091">
    <property type="entry name" value="METHYLTETRAHYDROFOLATE:HOMOCYSTEINE METHYLTRANSFERASE RELATED"/>
    <property type="match status" value="1"/>
</dbReference>
<dbReference type="PANTHER" id="PTHR21091:SF169">
    <property type="entry name" value="UROPORPHYRINOGEN DECARBOXYLASE"/>
    <property type="match status" value="1"/>
</dbReference>
<dbReference type="Pfam" id="PF01208">
    <property type="entry name" value="URO-D"/>
    <property type="match status" value="1"/>
</dbReference>
<dbReference type="SUPFAM" id="SSF51726">
    <property type="entry name" value="UROD/MetE-like"/>
    <property type="match status" value="1"/>
</dbReference>
<dbReference type="PROSITE" id="PS00906">
    <property type="entry name" value="UROD_1"/>
    <property type="match status" value="1"/>
</dbReference>
<dbReference type="PROSITE" id="PS00907">
    <property type="entry name" value="UROD_2"/>
    <property type="match status" value="1"/>
</dbReference>
<proteinExistence type="inferred from homology"/>
<accession>Q0AKD9</accession>
<reference key="1">
    <citation type="submission" date="2006-08" db="EMBL/GenBank/DDBJ databases">
        <title>Complete sequence of Maricaulis maris MCS10.</title>
        <authorList>
            <consortium name="US DOE Joint Genome Institute"/>
            <person name="Copeland A."/>
            <person name="Lucas S."/>
            <person name="Lapidus A."/>
            <person name="Barry K."/>
            <person name="Detter J.C."/>
            <person name="Glavina del Rio T."/>
            <person name="Hammon N."/>
            <person name="Israni S."/>
            <person name="Dalin E."/>
            <person name="Tice H."/>
            <person name="Pitluck S."/>
            <person name="Saunders E."/>
            <person name="Brettin T."/>
            <person name="Bruce D."/>
            <person name="Han C."/>
            <person name="Tapia R."/>
            <person name="Gilna P."/>
            <person name="Schmutz J."/>
            <person name="Larimer F."/>
            <person name="Land M."/>
            <person name="Hauser L."/>
            <person name="Kyrpides N."/>
            <person name="Mikhailova N."/>
            <person name="Viollier P."/>
            <person name="Stephens C."/>
            <person name="Richardson P."/>
        </authorList>
    </citation>
    <scope>NUCLEOTIDE SEQUENCE [LARGE SCALE GENOMIC DNA]</scope>
    <source>
        <strain>MCS10</strain>
    </source>
</reference>
<name>DCUP_MARMM</name>
<protein>
    <recommendedName>
        <fullName evidence="1">Uroporphyrinogen decarboxylase</fullName>
        <shortName evidence="1">UPD</shortName>
        <shortName evidence="1">URO-D</shortName>
        <ecNumber evidence="1">4.1.1.37</ecNumber>
    </recommendedName>
</protein>
<organism>
    <name type="scientific">Maricaulis maris (strain MCS10)</name>
    <name type="common">Caulobacter maris</name>
    <dbReference type="NCBI Taxonomy" id="394221"/>
    <lineage>
        <taxon>Bacteria</taxon>
        <taxon>Pseudomonadati</taxon>
        <taxon>Pseudomonadota</taxon>
        <taxon>Alphaproteobacteria</taxon>
        <taxon>Maricaulales</taxon>
        <taxon>Maricaulaceae</taxon>
        <taxon>Maricaulis</taxon>
    </lineage>
</organism>